<gene>
    <name type="primary">CES5A</name>
    <name type="synonym">CES7</name>
</gene>
<dbReference type="EC" id="3.1.1.1"/>
<dbReference type="EMBL" id="AB045377">
    <property type="protein sequence ID" value="BAC22577.1"/>
    <property type="molecule type" value="mRNA"/>
</dbReference>
<dbReference type="RefSeq" id="NP_001009188.1">
    <property type="nucleotide sequence ID" value="NM_001009188.1"/>
</dbReference>
<dbReference type="SMR" id="Q8I034"/>
<dbReference type="FunCoup" id="Q8I034">
    <property type="interactions" value="3"/>
</dbReference>
<dbReference type="ESTHER" id="felca-CAUXIN">
    <property type="family name" value="Carb_B_Chordata"/>
</dbReference>
<dbReference type="GlyCosmos" id="Q8I034">
    <property type="glycosylation" value="4 sites, No reported glycans"/>
</dbReference>
<dbReference type="iPTMnet" id="Q8I034"/>
<dbReference type="PaxDb" id="9685-ENSFCAP00000013286"/>
<dbReference type="GeneID" id="445455"/>
<dbReference type="KEGG" id="fca:445455"/>
<dbReference type="CTD" id="221223"/>
<dbReference type="eggNOG" id="KOG1516">
    <property type="taxonomic scope" value="Eukaryota"/>
</dbReference>
<dbReference type="InParanoid" id="Q8I034"/>
<dbReference type="OrthoDB" id="3200163at2759"/>
<dbReference type="BioCyc" id="MetaCyc:MONOMER-20541"/>
<dbReference type="SABIO-RK" id="Q8I034"/>
<dbReference type="Proteomes" id="UP000011712">
    <property type="component" value="Unplaced"/>
</dbReference>
<dbReference type="GO" id="GO:0005576">
    <property type="term" value="C:extracellular region"/>
    <property type="evidence" value="ECO:0007669"/>
    <property type="project" value="UniProtKB-SubCell"/>
</dbReference>
<dbReference type="GO" id="GO:0106435">
    <property type="term" value="F:carboxylesterase activity"/>
    <property type="evidence" value="ECO:0007669"/>
    <property type="project" value="UniProtKB-EC"/>
</dbReference>
<dbReference type="CDD" id="cd00312">
    <property type="entry name" value="Esterase_lipase"/>
    <property type="match status" value="1"/>
</dbReference>
<dbReference type="FunFam" id="3.40.50.1820:FF:000011">
    <property type="entry name" value="Carboxylic ester hydrolase"/>
    <property type="match status" value="1"/>
</dbReference>
<dbReference type="Gene3D" id="3.40.50.1820">
    <property type="entry name" value="alpha/beta hydrolase"/>
    <property type="match status" value="1"/>
</dbReference>
<dbReference type="InterPro" id="IPR029058">
    <property type="entry name" value="AB_hydrolase_fold"/>
</dbReference>
<dbReference type="InterPro" id="IPR002018">
    <property type="entry name" value="CarbesteraseB"/>
</dbReference>
<dbReference type="InterPro" id="IPR019826">
    <property type="entry name" value="Carboxylesterase_B_AS"/>
</dbReference>
<dbReference type="InterPro" id="IPR019819">
    <property type="entry name" value="Carboxylesterase_B_CS"/>
</dbReference>
<dbReference type="InterPro" id="IPR050309">
    <property type="entry name" value="Type-B_Carboxylest/Lipase"/>
</dbReference>
<dbReference type="PANTHER" id="PTHR11559">
    <property type="entry name" value="CARBOXYLESTERASE"/>
    <property type="match status" value="1"/>
</dbReference>
<dbReference type="Pfam" id="PF00135">
    <property type="entry name" value="COesterase"/>
    <property type="match status" value="1"/>
</dbReference>
<dbReference type="SUPFAM" id="SSF53474">
    <property type="entry name" value="alpha/beta-Hydrolases"/>
    <property type="match status" value="1"/>
</dbReference>
<dbReference type="PROSITE" id="PS00122">
    <property type="entry name" value="CARBOXYLESTERASE_B_1"/>
    <property type="match status" value="1"/>
</dbReference>
<dbReference type="PROSITE" id="PS00941">
    <property type="entry name" value="CARBOXYLESTERASE_B_2"/>
    <property type="match status" value="1"/>
</dbReference>
<organism>
    <name type="scientific">Felis catus</name>
    <name type="common">Cat</name>
    <name type="synonym">Felis silvestris catus</name>
    <dbReference type="NCBI Taxonomy" id="9685"/>
    <lineage>
        <taxon>Eukaryota</taxon>
        <taxon>Metazoa</taxon>
        <taxon>Chordata</taxon>
        <taxon>Craniata</taxon>
        <taxon>Vertebrata</taxon>
        <taxon>Euteleostomi</taxon>
        <taxon>Mammalia</taxon>
        <taxon>Eutheria</taxon>
        <taxon>Laurasiatheria</taxon>
        <taxon>Carnivora</taxon>
        <taxon>Feliformia</taxon>
        <taxon>Felidae</taxon>
        <taxon>Felinae</taxon>
        <taxon>Felis</taxon>
    </lineage>
</organism>
<evidence type="ECO:0000250" key="1"/>
<evidence type="ECO:0000255" key="2"/>
<evidence type="ECO:0000255" key="3">
    <source>
        <dbReference type="PROSITE-ProRule" id="PRU10039"/>
    </source>
</evidence>
<evidence type="ECO:0000269" key="4">
    <source>
    </source>
</evidence>
<evidence type="ECO:0000269" key="5">
    <source>
    </source>
</evidence>
<evidence type="ECO:0000269" key="6">
    <source>
    </source>
</evidence>
<evidence type="ECO:0000269" key="7">
    <source>
    </source>
</evidence>
<evidence type="ECO:0000269" key="8">
    <source>
    </source>
</evidence>
<evidence type="ECO:0000305" key="9"/>
<keyword id="KW-0903">Direct protein sequencing</keyword>
<keyword id="KW-1015">Disulfide bond</keyword>
<keyword id="KW-0325">Glycoprotein</keyword>
<keyword id="KW-0378">Hydrolase</keyword>
<keyword id="KW-1185">Reference proteome</keyword>
<keyword id="KW-0964">Secreted</keyword>
<keyword id="KW-0719">Serine esterase</keyword>
<keyword id="KW-0732">Signal</keyword>
<feature type="signal peptide" evidence="4">
    <location>
        <begin position="1"/>
        <end position="28"/>
    </location>
</feature>
<feature type="chain" id="PRO_0000308590" description="Carboxylesterase 5A">
    <location>
        <begin position="29"/>
        <end position="545"/>
    </location>
</feature>
<feature type="active site" description="Acyl-ester intermediate" evidence="3">
    <location>
        <position position="226"/>
    </location>
</feature>
<feature type="active site" description="Charge relay system" evidence="1">
    <location>
        <position position="346"/>
    </location>
</feature>
<feature type="active site" description="Charge relay system" evidence="1">
    <location>
        <position position="454"/>
    </location>
</feature>
<feature type="glycosylation site" description="N-linked (GlcNAc...) (complex) asparagine" evidence="8">
    <location>
        <position position="86"/>
    </location>
</feature>
<feature type="glycosylation site" description="N-linked (GlcNAc...) asparagine" evidence="2">
    <location>
        <position position="134"/>
    </location>
</feature>
<feature type="glycosylation site" description="N-linked (GlcNAc...) asparagine" evidence="2">
    <location>
        <position position="363"/>
    </location>
</feature>
<feature type="glycosylation site" description="N-linked (GlcNAc...) asparagine" evidence="2">
    <location>
        <position position="443"/>
    </location>
</feature>
<feature type="disulfide bond" evidence="1">
    <location>
        <begin position="94"/>
        <end position="121"/>
    </location>
</feature>
<feature type="disulfide bond" evidence="1">
    <location>
        <begin position="281"/>
        <end position="292"/>
    </location>
</feature>
<comment type="function">
    <text evidence="7">Carboxylesterase present at high level in urine that regulates production of felinine, a probable pheromone precursor. Probably acts by hydrolyzing the peptide bond of the felinine precursor 3-methylbutanol cyteinylglycine, producing felinine and glycine in cat urine.</text>
</comment>
<comment type="catalytic activity">
    <reaction evidence="3">
        <text>a carboxylic ester + H2O = an alcohol + a carboxylate + H(+)</text>
        <dbReference type="Rhea" id="RHEA:21164"/>
        <dbReference type="ChEBI" id="CHEBI:15377"/>
        <dbReference type="ChEBI" id="CHEBI:15378"/>
        <dbReference type="ChEBI" id="CHEBI:29067"/>
        <dbReference type="ChEBI" id="CHEBI:30879"/>
        <dbReference type="ChEBI" id="CHEBI:33308"/>
        <dbReference type="EC" id="3.1.1.1"/>
    </reaction>
</comment>
<comment type="biophysicochemical properties">
    <kinetics>
        <KM evidence="4">506 uM for p-NPA</KM>
        <Vmax evidence="4">7.61 umol/min/mg enzyme with p-NPA as substrate</Vmax>
    </kinetics>
</comment>
<comment type="subcellular location">
    <subcellularLocation>
        <location evidence="1">Secreted</location>
    </subcellularLocation>
</comment>
<comment type="tissue specificity">
    <text evidence="4 6">Present at high level in urine. Expressed in the kidney proximal straight tubular cells and is secreted from the apical compartment of the cells into the urine (at protein level). In mature cats, it is present at higher level in intact males than in castrated males or in intact or spayed females.</text>
</comment>
<comment type="developmental stage">
    <text evidence="6">Present in cats older than about 3 months, and its level increases with age.</text>
</comment>
<comment type="induction">
    <text evidence="5 6">Strongly down-regulated in cats suffering from tubulointerstitial nephritis (TIN). Excretion decreases immediately after castration.</text>
</comment>
<comment type="PTM">
    <text evidence="4 8">N-glycosylated; contains a fucosylated complex carbohydrate.</text>
</comment>
<comment type="miscellaneous">
    <text>Protein specifically present in urine of cat. Present at high level in urine of members of the genus Felis and Lynx but not in urine of other felines.</text>
</comment>
<comment type="similarity">
    <text evidence="9">Belongs to the type-B carboxylesterase/lipase family.</text>
</comment>
<name>EST5A_FELCA</name>
<sequence length="545" mass="60506">MSGMWVHPGRTLIWALWVLAAVIKGPAADAPVRSTRLGWVRGKQTTVLGSTVPVNMFLGIPYAAPPLGPLRFKQPKPALPGNDFRNATSYPKLCFQDLEWLVSYQHVLKVRYPKLEASEDCLYLNIYAPAHADNGSNLPVMVWFPGGAFKMGSASSFDGSALAAYEDVLIVTTQYRLGIFGFFDTGDEHARGNWALLDQVAALTWVRDNIEFFGGDPRSVTIFGESAGAISVSSLILSPIANGLFHKAIMESGVAILPLLMRPPGDERKKDLQVLARICGCHASDSAALLQCLRAKPSEELMDISKKLTFSIPVIDDFFFPDEPVALLTQKAFNSVPSIIGVNNHECAFLLSTEFSEILGGSNRSLALYLVHTFLNIPTQYLHLVADHYFYNKHSPVEIRDSFLDLLGDVLFVVPGVVTARYHRDAGAPVYFYEFQHPPQCLNDTRPAFVKADHSDEIRFVFGGAFLKGDIVMFEGATEEEKLLSRKMMRYWANFARTGDPNGEGVPLWPAYTQSEQYLKLDLSVSVGQKLKEQEVEFWMNTIVP</sequence>
<protein>
    <recommendedName>
        <fullName>Carboxylesterase 5A</fullName>
        <ecNumber>3.1.1.1</ecNumber>
    </recommendedName>
    <alternativeName>
        <fullName>Carboxylesterase-like urinary excreted protein</fullName>
        <shortName>Cauxin</shortName>
    </alternativeName>
</protein>
<accession>Q8I034</accession>
<proteinExistence type="evidence at protein level"/>
<reference key="1">
    <citation type="journal article" date="2003" name="Biochem. J.">
        <title>Molecular cloning and characterization of a novel carboxylesterase-like protein that is physiologically present at high concentrations in the urine of domestic cats (Felis catus).</title>
        <authorList>
            <person name="Miyazaki M."/>
            <person name="Kamiie K."/>
            <person name="Soeta S."/>
            <person name="Taira H."/>
            <person name="Yamashita T."/>
        </authorList>
    </citation>
    <scope>NUCLEOTIDE SEQUENCE [MRNA]</scope>
    <scope>PROTEIN SEQUENCE OF 29-57; 93-114; 151-172; 248-264; 280-297; 308-330 AND 533-541</scope>
    <scope>BIOPHYSICOCHEMICAL PROPERTIES</scope>
    <scope>GLYCOSYLATION</scope>
    <scope>TISSUE SPECIFICITY</scope>
    <source>
        <tissue>Kidney</tissue>
    </source>
</reference>
<reference key="2">
    <citation type="journal article" date="2006" name="Comp. Biochem. Physiol.">
        <title>Species-, sex-, and age-dependent urinary excretion of cauxin, a mammalian carboxylesterase.</title>
        <authorList>
            <person name="Miyazaki M."/>
            <person name="Yamashita T."/>
            <person name="Hosokawa M."/>
            <person name="Taira H."/>
            <person name="Suzuki A."/>
        </authorList>
    </citation>
    <scope>TISSUE SPECIFICITY</scope>
    <scope>DEVELOPMENTAL STAGE</scope>
    <scope>INDUCTION</scope>
</reference>
<reference key="3">
    <citation type="journal article" date="2006" name="Chem. Biol.">
        <title>A major urinary protein of the domestic cat regulates the production of felinine, a putative pheromone precursor.</title>
        <authorList>
            <person name="Miyazaki M."/>
            <person name="Yamashita T."/>
            <person name="Suzuki Y."/>
            <person name="Saito Y."/>
            <person name="Soeta S."/>
            <person name="Taira H."/>
            <person name="Suzuki A."/>
        </authorList>
    </citation>
    <scope>FUNCTION</scope>
</reference>
<reference key="4">
    <citation type="journal article" date="2007" name="Biosci. Biotechnol. Biochem.">
        <title>Structural characterization of N-glycans of cauxin by MALDI-TOF mass spectrometry and nano LC-ESI-mass spectrometry.</title>
        <authorList>
            <person name="Suzuki Y."/>
            <person name="Miyazaki M."/>
            <person name="Ito E."/>
            <person name="Suzuki M."/>
            <person name="Yamashita T."/>
            <person name="Taira H."/>
            <person name="Suzuki A."/>
        </authorList>
    </citation>
    <scope>GLYCOSYLATION AT ASN-86</scope>
</reference>
<reference key="5">
    <citation type="journal article" date="2007" name="Res. Vet. Sci.">
        <title>Tubulointerstitial nephritis causes decreased renal expression and urinary excretion of cauxin, a major urinary protein of the domestic cat.</title>
        <authorList>
            <person name="Miyazaki M."/>
            <person name="Soeta S."/>
            <person name="Yamagishi N."/>
            <person name="Taira H."/>
            <person name="Suzuki A."/>
            <person name="Yamashita T."/>
        </authorList>
    </citation>
    <scope>INDUCTION</scope>
</reference>